<comment type="function">
    <text evidence="1">Required for formate dehydrogenase (FDH) activity. Acts as a sulfur carrier protein that transfers sulfur from IscS to the molybdenum cofactor prior to its insertion into FDH.</text>
</comment>
<comment type="subcellular location">
    <subcellularLocation>
        <location evidence="1">Cytoplasm</location>
    </subcellularLocation>
</comment>
<comment type="similarity">
    <text evidence="1">Belongs to the FdhD family.</text>
</comment>
<feature type="chain" id="PRO_1000020831" description="Sulfur carrier protein FdhD">
    <location>
        <begin position="1"/>
        <end position="274"/>
    </location>
</feature>
<feature type="active site" description="Cysteine persulfide intermediate" evidence="1">
    <location>
        <position position="121"/>
    </location>
</feature>
<feature type="binding site" evidence="1">
    <location>
        <begin position="258"/>
        <end position="263"/>
    </location>
    <ligand>
        <name>Mo-bis(molybdopterin guanine dinucleotide)</name>
        <dbReference type="ChEBI" id="CHEBI:60539"/>
    </ligand>
</feature>
<name>FDHD_YERPA</name>
<protein>
    <recommendedName>
        <fullName evidence="1">Sulfur carrier protein FdhD</fullName>
    </recommendedName>
</protein>
<proteinExistence type="inferred from homology"/>
<dbReference type="EMBL" id="CP000308">
    <property type="protein sequence ID" value="ABG14987.1"/>
    <property type="molecule type" value="Genomic_DNA"/>
</dbReference>
<dbReference type="RefSeq" id="WP_002209612.1">
    <property type="nucleotide sequence ID" value="NZ_CP009906.1"/>
</dbReference>
<dbReference type="SMR" id="Q1C3I5"/>
<dbReference type="GeneID" id="57974655"/>
<dbReference type="KEGG" id="ypa:YPA_3025"/>
<dbReference type="Proteomes" id="UP000001971">
    <property type="component" value="Chromosome"/>
</dbReference>
<dbReference type="GO" id="GO:0005737">
    <property type="term" value="C:cytoplasm"/>
    <property type="evidence" value="ECO:0007669"/>
    <property type="project" value="UniProtKB-SubCell"/>
</dbReference>
<dbReference type="GO" id="GO:0097163">
    <property type="term" value="F:sulfur carrier activity"/>
    <property type="evidence" value="ECO:0007669"/>
    <property type="project" value="UniProtKB-UniRule"/>
</dbReference>
<dbReference type="GO" id="GO:0016783">
    <property type="term" value="F:sulfurtransferase activity"/>
    <property type="evidence" value="ECO:0007669"/>
    <property type="project" value="InterPro"/>
</dbReference>
<dbReference type="GO" id="GO:0006777">
    <property type="term" value="P:Mo-molybdopterin cofactor biosynthetic process"/>
    <property type="evidence" value="ECO:0007669"/>
    <property type="project" value="UniProtKB-UniRule"/>
</dbReference>
<dbReference type="Gene3D" id="3.10.20.10">
    <property type="match status" value="1"/>
</dbReference>
<dbReference type="Gene3D" id="3.40.140.10">
    <property type="entry name" value="Cytidine Deaminase, domain 2"/>
    <property type="match status" value="1"/>
</dbReference>
<dbReference type="HAMAP" id="MF_00187">
    <property type="entry name" value="FdhD"/>
    <property type="match status" value="1"/>
</dbReference>
<dbReference type="InterPro" id="IPR016193">
    <property type="entry name" value="Cytidine_deaminase-like"/>
</dbReference>
<dbReference type="InterPro" id="IPR003786">
    <property type="entry name" value="FdhD"/>
</dbReference>
<dbReference type="NCBIfam" id="TIGR00129">
    <property type="entry name" value="fdhD_narQ"/>
    <property type="match status" value="1"/>
</dbReference>
<dbReference type="PANTHER" id="PTHR30592">
    <property type="entry name" value="FORMATE DEHYDROGENASE"/>
    <property type="match status" value="1"/>
</dbReference>
<dbReference type="PANTHER" id="PTHR30592:SF1">
    <property type="entry name" value="SULFUR CARRIER PROTEIN FDHD"/>
    <property type="match status" value="1"/>
</dbReference>
<dbReference type="Pfam" id="PF02634">
    <property type="entry name" value="FdhD-NarQ"/>
    <property type="match status" value="1"/>
</dbReference>
<dbReference type="PIRSF" id="PIRSF015626">
    <property type="entry name" value="FdhD"/>
    <property type="match status" value="1"/>
</dbReference>
<dbReference type="SUPFAM" id="SSF53927">
    <property type="entry name" value="Cytidine deaminase-like"/>
    <property type="match status" value="1"/>
</dbReference>
<organism>
    <name type="scientific">Yersinia pestis bv. Antiqua (strain Antiqua)</name>
    <dbReference type="NCBI Taxonomy" id="360102"/>
    <lineage>
        <taxon>Bacteria</taxon>
        <taxon>Pseudomonadati</taxon>
        <taxon>Pseudomonadota</taxon>
        <taxon>Gammaproteobacteria</taxon>
        <taxon>Enterobacterales</taxon>
        <taxon>Yersiniaceae</taxon>
        <taxon>Yersinia</taxon>
    </lineage>
</organism>
<accession>Q1C3I5</accession>
<reference key="1">
    <citation type="journal article" date="2006" name="J. Bacteriol.">
        <title>Complete genome sequence of Yersinia pestis strains Antiqua and Nepal516: evidence of gene reduction in an emerging pathogen.</title>
        <authorList>
            <person name="Chain P.S.G."/>
            <person name="Hu P."/>
            <person name="Malfatti S.A."/>
            <person name="Radnedge L."/>
            <person name="Larimer F."/>
            <person name="Vergez L.M."/>
            <person name="Worsham P."/>
            <person name="Chu M.C."/>
            <person name="Andersen G.L."/>
        </authorList>
    </citation>
    <scope>NUCLEOTIDE SEQUENCE [LARGE SCALE GENOMIC DNA]</scope>
    <source>
        <strain>Antiqua</strain>
    </source>
</reference>
<sequence length="274" mass="29735">MSQIKPSRLSSSAEIRGARQLDVLQRHKLAEPQQDWLAEEVPVALVYNGISHVVMMATPKDLAAFALGFSLSEGIISSPQEIYSIEMTPGCNGIEVNIELSSRRFAGLKERRRAMAGRTGCGVCGIEQLDDIFRPITPLPFTQAFNLEHLDTALAQLKQVQPVGQLTGCTHAAAWINPEGELLGGCEDVGRHVALDKLLGIRAKQPWQQGAVLVSSRASYEMVQKTAMCGAEILFAVSAATTLAVEVAERCNLTLVGFSKPGRATVYTHPQRIK</sequence>
<keyword id="KW-0963">Cytoplasm</keyword>
<keyword id="KW-0501">Molybdenum cofactor biosynthesis</keyword>
<gene>
    <name evidence="1" type="primary">fdhD</name>
    <name type="ordered locus">YPA_3025</name>
</gene>
<evidence type="ECO:0000255" key="1">
    <source>
        <dbReference type="HAMAP-Rule" id="MF_00187"/>
    </source>
</evidence>